<dbReference type="EMBL" id="CP000046">
    <property type="protein sequence ID" value="AAW38350.1"/>
    <property type="status" value="ALT_INIT"/>
    <property type="molecule type" value="Genomic_DNA"/>
</dbReference>
<dbReference type="SMR" id="Q5HF02"/>
<dbReference type="KEGG" id="sac:SACOL1823"/>
<dbReference type="HOGENOM" id="CLU_043931_1_0_9"/>
<dbReference type="Proteomes" id="UP000000530">
    <property type="component" value="Chromosome"/>
</dbReference>
<dbReference type="GO" id="GO:0005886">
    <property type="term" value="C:plasma membrane"/>
    <property type="evidence" value="ECO:0007669"/>
    <property type="project" value="UniProtKB-SubCell"/>
</dbReference>
<dbReference type="GO" id="GO:0015105">
    <property type="term" value="F:arsenite transmembrane transporter activity"/>
    <property type="evidence" value="ECO:0007669"/>
    <property type="project" value="InterPro"/>
</dbReference>
<dbReference type="GO" id="GO:0046685">
    <property type="term" value="P:response to arsenic-containing substance"/>
    <property type="evidence" value="ECO:0007669"/>
    <property type="project" value="UniProtKB-KW"/>
</dbReference>
<dbReference type="CDD" id="cd01118">
    <property type="entry name" value="ArsB_permease"/>
    <property type="match status" value="1"/>
</dbReference>
<dbReference type="InterPro" id="IPR000802">
    <property type="entry name" value="Arsenical_pump_ArsB"/>
</dbReference>
<dbReference type="NCBIfam" id="TIGR00935">
    <property type="entry name" value="2a45"/>
    <property type="match status" value="1"/>
</dbReference>
<dbReference type="NCBIfam" id="NF033877">
    <property type="entry name" value="arsB_Sta_pI258"/>
    <property type="match status" value="1"/>
</dbReference>
<dbReference type="NCBIfam" id="NF011980">
    <property type="entry name" value="PRK15445.1"/>
    <property type="match status" value="1"/>
</dbReference>
<dbReference type="PANTHER" id="PTHR43302">
    <property type="entry name" value="TRANSPORTER ARSB-RELATED"/>
    <property type="match status" value="1"/>
</dbReference>
<dbReference type="PANTHER" id="PTHR43302:SF5">
    <property type="entry name" value="TRANSPORTER ARSB-RELATED"/>
    <property type="match status" value="1"/>
</dbReference>
<dbReference type="Pfam" id="PF02040">
    <property type="entry name" value="ArsB"/>
    <property type="match status" value="1"/>
</dbReference>
<dbReference type="PRINTS" id="PR00758">
    <property type="entry name" value="ARSENICPUMP"/>
</dbReference>
<comment type="function">
    <text>Involved in arsenical resistance. Thought to form the channel of an arsenite pump.</text>
</comment>
<comment type="subcellular location">
    <subcellularLocation>
        <location evidence="2">Cell membrane</location>
        <topology evidence="2">Multi-pass membrane protein</topology>
    </subcellularLocation>
</comment>
<comment type="similarity">
    <text evidence="2">Belongs to the ArsB family.</text>
</comment>
<comment type="sequence caution" evidence="2">
    <conflict type="erroneous initiation">
        <sequence resource="EMBL-CDS" id="AAW38350"/>
    </conflict>
</comment>
<gene>
    <name type="primary">arsB</name>
    <name type="ordered locus">SACOL1823</name>
</gene>
<evidence type="ECO:0000255" key="1"/>
<evidence type="ECO:0000305" key="2"/>
<name>ARSB_STAAC</name>
<keyword id="KW-0059">Arsenical resistance</keyword>
<keyword id="KW-1003">Cell membrane</keyword>
<keyword id="KW-0472">Membrane</keyword>
<keyword id="KW-0812">Transmembrane</keyword>
<keyword id="KW-1133">Transmembrane helix</keyword>
<keyword id="KW-0813">Transport</keyword>
<protein>
    <recommendedName>
        <fullName>Arsenical pump membrane protein</fullName>
    </recommendedName>
    <alternativeName>
        <fullName>Arsenic efflux pump protein</fullName>
    </alternativeName>
</protein>
<reference key="1">
    <citation type="journal article" date="2005" name="J. Bacteriol.">
        <title>Insights on evolution of virulence and resistance from the complete genome analysis of an early methicillin-resistant Staphylococcus aureus strain and a biofilm-producing methicillin-resistant Staphylococcus epidermidis strain.</title>
        <authorList>
            <person name="Gill S.R."/>
            <person name="Fouts D.E."/>
            <person name="Archer G.L."/>
            <person name="Mongodin E.F."/>
            <person name="DeBoy R.T."/>
            <person name="Ravel J."/>
            <person name="Paulsen I.T."/>
            <person name="Kolonay J.F."/>
            <person name="Brinkac L.M."/>
            <person name="Beanan M.J."/>
            <person name="Dodson R.J."/>
            <person name="Daugherty S.C."/>
            <person name="Madupu R."/>
            <person name="Angiuoli S.V."/>
            <person name="Durkin A.S."/>
            <person name="Haft D.H."/>
            <person name="Vamathevan J.J."/>
            <person name="Khouri H."/>
            <person name="Utterback T.R."/>
            <person name="Lee C."/>
            <person name="Dimitrov G."/>
            <person name="Jiang L."/>
            <person name="Qin H."/>
            <person name="Weidman J."/>
            <person name="Tran K."/>
            <person name="Kang K.H."/>
            <person name="Hance I.R."/>
            <person name="Nelson K.E."/>
            <person name="Fraser C.M."/>
        </authorList>
    </citation>
    <scope>NUCLEOTIDE SEQUENCE [LARGE SCALE GENOMIC DNA]</scope>
    <source>
        <strain>COL</strain>
    </source>
</reference>
<proteinExistence type="inferred from homology"/>
<feature type="chain" id="PRO_0000201470" description="Arsenical pump membrane protein">
    <location>
        <begin position="1"/>
        <end position="429"/>
    </location>
</feature>
<feature type="transmembrane region" description="Helical" evidence="1">
    <location>
        <begin position="3"/>
        <end position="23"/>
    </location>
</feature>
<feature type="transmembrane region" description="Helical" evidence="1">
    <location>
        <begin position="25"/>
        <end position="45"/>
    </location>
</feature>
<feature type="transmembrane region" description="Helical" evidence="1">
    <location>
        <begin position="50"/>
        <end position="70"/>
    </location>
</feature>
<feature type="transmembrane region" description="Helical" evidence="1">
    <location>
        <begin position="99"/>
        <end position="119"/>
    </location>
</feature>
<feature type="transmembrane region" description="Helical" evidence="1">
    <location>
        <begin position="137"/>
        <end position="157"/>
    </location>
</feature>
<feature type="transmembrane region" description="Helical" evidence="1">
    <location>
        <begin position="180"/>
        <end position="200"/>
    </location>
</feature>
<feature type="transmembrane region" description="Helical" evidence="1">
    <location>
        <begin position="222"/>
        <end position="242"/>
    </location>
</feature>
<feature type="transmembrane region" description="Helical" evidence="1">
    <location>
        <begin position="244"/>
        <end position="264"/>
    </location>
</feature>
<feature type="transmembrane region" description="Helical" evidence="1">
    <location>
        <begin position="275"/>
        <end position="295"/>
    </location>
</feature>
<feature type="transmembrane region" description="Helical" evidence="1">
    <location>
        <begin position="316"/>
        <end position="336"/>
    </location>
</feature>
<feature type="transmembrane region" description="Helical" evidence="1">
    <location>
        <begin position="372"/>
        <end position="392"/>
    </location>
</feature>
<feature type="transmembrane region" description="Helical" evidence="1">
    <location>
        <begin position="408"/>
        <end position="428"/>
    </location>
</feature>
<organism>
    <name type="scientific">Staphylococcus aureus (strain COL)</name>
    <dbReference type="NCBI Taxonomy" id="93062"/>
    <lineage>
        <taxon>Bacteria</taxon>
        <taxon>Bacillati</taxon>
        <taxon>Bacillota</taxon>
        <taxon>Bacilli</taxon>
        <taxon>Bacillales</taxon>
        <taxon>Staphylococcaceae</taxon>
        <taxon>Staphylococcus</taxon>
    </lineage>
</organism>
<sequence>MTTLATLIFLVTLLFVLWQPKGLDIGITALTGAFIAVITGVVSFSDVFEVTGIVWNATLTFVSVILISLILDKVGLFEWSAIHMLHASKGNGLKMFVYIILLGAIVAAFFANDGAALILTPIVLAMVKNIGFSKRAIFPFIIASGFIADTTSLPLIVSNLVNIISADYFHVGFVRYFSRMIIPNLFSLLASIIVLWLYFRKAIPKTFDDNNIKHPKDAINDLKLFKISWIVLVILLFGYLISEFTKIPVSIFTGIIAFIFLMLARKSNAVNIKQVIKGAPWNIVLFSIGMYIVVFGLRNAGITLILAKILEYISNYGLFSTILGMGFISAFLSSIMNNMPTVLIDAIAIGQSNVHGMLKEGLIYANVIGSDLGPKITPIGSLATLLWLHVLTQKDVKISWGTYFKTGIIITIPVLFITLIGLYLTLIIF</sequence>
<accession>Q5HF02</accession>